<name>RS2_PASMU</name>
<feature type="chain" id="PRO_0000134211" description="Small ribosomal subunit protein uS2">
    <location>
        <begin position="1"/>
        <end position="240"/>
    </location>
</feature>
<proteinExistence type="inferred from homology"/>
<comment type="similarity">
    <text evidence="1">Belongs to the universal ribosomal protein uS2 family.</text>
</comment>
<comment type="sequence caution" evidence="1">
    <conflict type="erroneous initiation">
        <sequence resource="EMBL-CDS" id="AAK04068"/>
    </conflict>
</comment>
<dbReference type="EMBL" id="AE004439">
    <property type="protein sequence ID" value="AAK04068.1"/>
    <property type="status" value="ALT_INIT"/>
    <property type="molecule type" value="Genomic_DNA"/>
</dbReference>
<dbReference type="RefSeq" id="WP_005725076.1">
    <property type="nucleotide sequence ID" value="NC_002663.1"/>
</dbReference>
<dbReference type="SMR" id="P57982"/>
<dbReference type="STRING" id="272843.PM1984"/>
<dbReference type="EnsemblBacteria" id="AAK04068">
    <property type="protein sequence ID" value="AAK04068"/>
    <property type="gene ID" value="PM1984"/>
</dbReference>
<dbReference type="GeneID" id="77207311"/>
<dbReference type="KEGG" id="pmu:PM1984"/>
<dbReference type="HOGENOM" id="CLU_040318_1_0_6"/>
<dbReference type="OrthoDB" id="9808036at2"/>
<dbReference type="Proteomes" id="UP000000809">
    <property type="component" value="Chromosome"/>
</dbReference>
<dbReference type="GO" id="GO:0022627">
    <property type="term" value="C:cytosolic small ribosomal subunit"/>
    <property type="evidence" value="ECO:0007669"/>
    <property type="project" value="TreeGrafter"/>
</dbReference>
<dbReference type="GO" id="GO:0003735">
    <property type="term" value="F:structural constituent of ribosome"/>
    <property type="evidence" value="ECO:0007669"/>
    <property type="project" value="InterPro"/>
</dbReference>
<dbReference type="GO" id="GO:0006412">
    <property type="term" value="P:translation"/>
    <property type="evidence" value="ECO:0007669"/>
    <property type="project" value="UniProtKB-UniRule"/>
</dbReference>
<dbReference type="CDD" id="cd01425">
    <property type="entry name" value="RPS2"/>
    <property type="match status" value="1"/>
</dbReference>
<dbReference type="FunFam" id="1.10.287.610:FF:000001">
    <property type="entry name" value="30S ribosomal protein S2"/>
    <property type="match status" value="1"/>
</dbReference>
<dbReference type="Gene3D" id="3.40.50.10490">
    <property type="entry name" value="Glucose-6-phosphate isomerase like protein, domain 1"/>
    <property type="match status" value="1"/>
</dbReference>
<dbReference type="Gene3D" id="1.10.287.610">
    <property type="entry name" value="Helix hairpin bin"/>
    <property type="match status" value="1"/>
</dbReference>
<dbReference type="HAMAP" id="MF_00291_B">
    <property type="entry name" value="Ribosomal_uS2_B"/>
    <property type="match status" value="1"/>
</dbReference>
<dbReference type="InterPro" id="IPR001865">
    <property type="entry name" value="Ribosomal_uS2"/>
</dbReference>
<dbReference type="InterPro" id="IPR005706">
    <property type="entry name" value="Ribosomal_uS2_bac/mit/plastid"/>
</dbReference>
<dbReference type="InterPro" id="IPR018130">
    <property type="entry name" value="Ribosomal_uS2_CS"/>
</dbReference>
<dbReference type="InterPro" id="IPR023591">
    <property type="entry name" value="Ribosomal_uS2_flav_dom_sf"/>
</dbReference>
<dbReference type="NCBIfam" id="TIGR01011">
    <property type="entry name" value="rpsB_bact"/>
    <property type="match status" value="1"/>
</dbReference>
<dbReference type="PANTHER" id="PTHR12534">
    <property type="entry name" value="30S RIBOSOMAL PROTEIN S2 PROKARYOTIC AND ORGANELLAR"/>
    <property type="match status" value="1"/>
</dbReference>
<dbReference type="PANTHER" id="PTHR12534:SF0">
    <property type="entry name" value="SMALL RIBOSOMAL SUBUNIT PROTEIN US2M"/>
    <property type="match status" value="1"/>
</dbReference>
<dbReference type="Pfam" id="PF00318">
    <property type="entry name" value="Ribosomal_S2"/>
    <property type="match status" value="1"/>
</dbReference>
<dbReference type="PRINTS" id="PR00395">
    <property type="entry name" value="RIBOSOMALS2"/>
</dbReference>
<dbReference type="SUPFAM" id="SSF52313">
    <property type="entry name" value="Ribosomal protein S2"/>
    <property type="match status" value="1"/>
</dbReference>
<dbReference type="PROSITE" id="PS00962">
    <property type="entry name" value="RIBOSOMAL_S2_1"/>
    <property type="match status" value="1"/>
</dbReference>
<dbReference type="PROSITE" id="PS00963">
    <property type="entry name" value="RIBOSOMAL_S2_2"/>
    <property type="match status" value="1"/>
</dbReference>
<protein>
    <recommendedName>
        <fullName evidence="1">Small ribosomal subunit protein uS2</fullName>
    </recommendedName>
    <alternativeName>
        <fullName>30S ribosomal protein S2</fullName>
    </alternativeName>
</protein>
<gene>
    <name type="primary">rpsB</name>
    <name type="synonym">rps2</name>
    <name type="ordered locus">PM1984</name>
</gene>
<reference key="1">
    <citation type="journal article" date="2001" name="Proc. Natl. Acad. Sci. U.S.A.">
        <title>Complete genomic sequence of Pasteurella multocida Pm70.</title>
        <authorList>
            <person name="May B.J."/>
            <person name="Zhang Q."/>
            <person name="Li L.L."/>
            <person name="Paustian M.L."/>
            <person name="Whittam T.S."/>
            <person name="Kapur V."/>
        </authorList>
    </citation>
    <scope>NUCLEOTIDE SEQUENCE [LARGE SCALE GENOMIC DNA]</scope>
    <source>
        <strain>Pm70</strain>
    </source>
</reference>
<evidence type="ECO:0000305" key="1"/>
<accession>P57982</accession>
<organism>
    <name type="scientific">Pasteurella multocida (strain Pm70)</name>
    <dbReference type="NCBI Taxonomy" id="272843"/>
    <lineage>
        <taxon>Bacteria</taxon>
        <taxon>Pseudomonadati</taxon>
        <taxon>Pseudomonadota</taxon>
        <taxon>Gammaproteobacteria</taxon>
        <taxon>Pasteurellales</taxon>
        <taxon>Pasteurellaceae</taxon>
        <taxon>Pasteurella</taxon>
    </lineage>
</organism>
<sequence>MAQVSMRDMLQAGVHFGHQTRYWNPKMKPFIYGPRNGVHIINLEKTVPMFNEALVELTRIAGNNGKILFVGTKRAATEAVKAAALDCQQYYVNHRWLGGMLTNWKTVRQSIRRLKDLETQSQDGTFDKLTKKEALMRTREMEKLELSLGGIKEMGGLPDALFVIGADHEHIAVKEANNLGIPVFAIVDTNSDPDGVDFVIPGNDDAARAIQLYLSAAAAAVKEGRHQDAVTEENFVAEAE</sequence>
<keyword id="KW-1185">Reference proteome</keyword>
<keyword id="KW-0687">Ribonucleoprotein</keyword>
<keyword id="KW-0689">Ribosomal protein</keyword>